<feature type="chain" id="PRO_0000357244" description="Methylthioribose-1-phosphate isomerase">
    <location>
        <begin position="1"/>
        <end position="359"/>
    </location>
</feature>
<feature type="active site" description="Proton donor" evidence="1">
    <location>
        <position position="241"/>
    </location>
</feature>
<feature type="binding site" evidence="1">
    <location>
        <begin position="52"/>
        <end position="54"/>
    </location>
    <ligand>
        <name>substrate</name>
    </ligand>
</feature>
<feature type="binding site" evidence="1">
    <location>
        <position position="90"/>
    </location>
    <ligand>
        <name>substrate</name>
    </ligand>
</feature>
<feature type="binding site" evidence="1">
    <location>
        <position position="200"/>
    </location>
    <ligand>
        <name>substrate</name>
    </ligand>
</feature>
<feature type="binding site" evidence="1">
    <location>
        <begin position="251"/>
        <end position="252"/>
    </location>
    <ligand>
        <name>substrate</name>
    </ligand>
</feature>
<feature type="site" description="Transition state stabilizer" evidence="1">
    <location>
        <position position="161"/>
    </location>
</feature>
<proteinExistence type="inferred from homology"/>
<name>MTNA_SULDN</name>
<protein>
    <recommendedName>
        <fullName evidence="1">Methylthioribose-1-phosphate isomerase</fullName>
        <shortName evidence="1">M1Pi</shortName>
        <shortName evidence="1">MTR-1-P isomerase</shortName>
        <ecNumber evidence="1">5.3.1.23</ecNumber>
    </recommendedName>
    <alternativeName>
        <fullName evidence="1">S-methyl-5-thioribose-1-phosphate isomerase</fullName>
    </alternativeName>
</protein>
<keyword id="KW-0028">Amino-acid biosynthesis</keyword>
<keyword id="KW-0413">Isomerase</keyword>
<keyword id="KW-0486">Methionine biosynthesis</keyword>
<keyword id="KW-1185">Reference proteome</keyword>
<accession>Q30P36</accession>
<gene>
    <name evidence="1" type="primary">mtnA</name>
    <name type="ordered locus">Suden_1971</name>
</gene>
<dbReference type="EC" id="5.3.1.23" evidence="1"/>
<dbReference type="EMBL" id="CP000153">
    <property type="protein sequence ID" value="ABB45245.1"/>
    <property type="molecule type" value="Genomic_DNA"/>
</dbReference>
<dbReference type="RefSeq" id="WP_011373585.1">
    <property type="nucleotide sequence ID" value="NC_007575.1"/>
</dbReference>
<dbReference type="SMR" id="Q30P36"/>
<dbReference type="STRING" id="326298.Suden_1971"/>
<dbReference type="KEGG" id="tdn:Suden_1971"/>
<dbReference type="eggNOG" id="COG0182">
    <property type="taxonomic scope" value="Bacteria"/>
</dbReference>
<dbReference type="HOGENOM" id="CLU_016218_1_2_7"/>
<dbReference type="OrthoDB" id="9803436at2"/>
<dbReference type="UniPathway" id="UPA00904">
    <property type="reaction ID" value="UER00874"/>
</dbReference>
<dbReference type="Proteomes" id="UP000002714">
    <property type="component" value="Chromosome"/>
</dbReference>
<dbReference type="GO" id="GO:0046523">
    <property type="term" value="F:S-methyl-5-thioribose-1-phosphate isomerase activity"/>
    <property type="evidence" value="ECO:0007669"/>
    <property type="project" value="UniProtKB-UniRule"/>
</dbReference>
<dbReference type="GO" id="GO:0019509">
    <property type="term" value="P:L-methionine salvage from methylthioadenosine"/>
    <property type="evidence" value="ECO:0007669"/>
    <property type="project" value="UniProtKB-UniRule"/>
</dbReference>
<dbReference type="FunFam" id="3.40.50.10470:FF:000006">
    <property type="entry name" value="Methylthioribose-1-phosphate isomerase"/>
    <property type="match status" value="1"/>
</dbReference>
<dbReference type="Gene3D" id="1.20.120.420">
    <property type="entry name" value="translation initiation factor eif-2b, domain 1"/>
    <property type="match status" value="1"/>
</dbReference>
<dbReference type="Gene3D" id="3.40.50.10470">
    <property type="entry name" value="Translation initiation factor eif-2b, domain 2"/>
    <property type="match status" value="1"/>
</dbReference>
<dbReference type="HAMAP" id="MF_01678">
    <property type="entry name" value="Salvage_MtnA"/>
    <property type="match status" value="1"/>
</dbReference>
<dbReference type="InterPro" id="IPR000649">
    <property type="entry name" value="IF-2B-related"/>
</dbReference>
<dbReference type="InterPro" id="IPR005251">
    <property type="entry name" value="IF-M1Pi"/>
</dbReference>
<dbReference type="InterPro" id="IPR042529">
    <property type="entry name" value="IF_2B-like_C"/>
</dbReference>
<dbReference type="InterPro" id="IPR011559">
    <property type="entry name" value="Initiation_fac_2B_a/b/d"/>
</dbReference>
<dbReference type="InterPro" id="IPR027363">
    <property type="entry name" value="M1Pi_N"/>
</dbReference>
<dbReference type="InterPro" id="IPR037171">
    <property type="entry name" value="NagB/RpiA_transferase-like"/>
</dbReference>
<dbReference type="NCBIfam" id="TIGR00524">
    <property type="entry name" value="eIF-2B_rel"/>
    <property type="match status" value="1"/>
</dbReference>
<dbReference type="NCBIfam" id="NF004326">
    <property type="entry name" value="PRK05720.1"/>
    <property type="match status" value="1"/>
</dbReference>
<dbReference type="NCBIfam" id="TIGR00512">
    <property type="entry name" value="salvage_mtnA"/>
    <property type="match status" value="1"/>
</dbReference>
<dbReference type="PANTHER" id="PTHR43475">
    <property type="entry name" value="METHYLTHIORIBOSE-1-PHOSPHATE ISOMERASE"/>
    <property type="match status" value="1"/>
</dbReference>
<dbReference type="PANTHER" id="PTHR43475:SF1">
    <property type="entry name" value="METHYLTHIORIBOSE-1-PHOSPHATE ISOMERASE"/>
    <property type="match status" value="1"/>
</dbReference>
<dbReference type="Pfam" id="PF01008">
    <property type="entry name" value="IF-2B"/>
    <property type="match status" value="1"/>
</dbReference>
<dbReference type="SUPFAM" id="SSF100950">
    <property type="entry name" value="NagB/RpiA/CoA transferase-like"/>
    <property type="match status" value="1"/>
</dbReference>
<reference key="1">
    <citation type="journal article" date="2008" name="Appl. Environ. Microbiol.">
        <title>Genome of the epsilonproteobacterial chemolithoautotroph Sulfurimonas denitrificans.</title>
        <authorList>
            <person name="Sievert S.M."/>
            <person name="Scott K.M."/>
            <person name="Klotz M.G."/>
            <person name="Chain P.S.G."/>
            <person name="Hauser L.J."/>
            <person name="Hemp J."/>
            <person name="Huegler M."/>
            <person name="Land M."/>
            <person name="Lapidus A."/>
            <person name="Larimer F.W."/>
            <person name="Lucas S."/>
            <person name="Malfatti S.A."/>
            <person name="Meyer F."/>
            <person name="Paulsen I.T."/>
            <person name="Ren Q."/>
            <person name="Simon J."/>
            <person name="Bailey K."/>
            <person name="Diaz E."/>
            <person name="Fitzpatrick K.A."/>
            <person name="Glover B."/>
            <person name="Gwatney N."/>
            <person name="Korajkic A."/>
            <person name="Long A."/>
            <person name="Mobberley J.M."/>
            <person name="Pantry S.N."/>
            <person name="Pazder G."/>
            <person name="Peterson S."/>
            <person name="Quintanilla J.D."/>
            <person name="Sprinkle R."/>
            <person name="Stephens J."/>
            <person name="Thomas P."/>
            <person name="Vaughn R."/>
            <person name="Weber M.J."/>
            <person name="Wooten L.L."/>
        </authorList>
    </citation>
    <scope>NUCLEOTIDE SEQUENCE [LARGE SCALE GENOMIC DNA]</scope>
    <source>
        <strain>ATCC 33889 / DSM 1251</strain>
    </source>
</reference>
<comment type="function">
    <text evidence="1">Catalyzes the interconversion of methylthioribose-1-phosphate (MTR-1-P) into methylthioribulose-1-phosphate (MTRu-1-P).</text>
</comment>
<comment type="catalytic activity">
    <reaction evidence="1">
        <text>5-(methylsulfanyl)-alpha-D-ribose 1-phosphate = 5-(methylsulfanyl)-D-ribulose 1-phosphate</text>
        <dbReference type="Rhea" id="RHEA:19989"/>
        <dbReference type="ChEBI" id="CHEBI:58533"/>
        <dbReference type="ChEBI" id="CHEBI:58548"/>
        <dbReference type="EC" id="5.3.1.23"/>
    </reaction>
</comment>
<comment type="pathway">
    <text evidence="1">Amino-acid biosynthesis; L-methionine biosynthesis via salvage pathway; L-methionine from S-methyl-5-thio-alpha-D-ribose 1-phosphate: step 1/6.</text>
</comment>
<comment type="similarity">
    <text evidence="2">Belongs to the eIF-2B alpha/beta/delta subunits family. MtnA subfamily.</text>
</comment>
<evidence type="ECO:0000255" key="1">
    <source>
        <dbReference type="HAMAP-Rule" id="MF_01678"/>
    </source>
</evidence>
<evidence type="ECO:0000305" key="2"/>
<sequence length="359" mass="39892">MQGNYKALWLNDDLFDECLEVIDQRLLPFIYDTRHLTTTEEVVTAIKNMTVRGAGVIGSVAAFGIYIAAMEVEGDYELLKEKALLIRESRPTAINLMWAVDKMMELLSASANLIEDARSFAIELNDAEALESQKIAEFGCEIIEEILKQKNKTRINILTHCNAGWLAVIDEGTALAPIYEAKRRGIDVHVWVDETRPRNQGASLTAWELSKEGIEHTIIADNMGGLLMQRGEVDMVIVGADRVSANGDVANKIGTYLKALAAHDNGVPFYVAIPASTFDFEIKDGVKEIPIEERSGDEVKFIRGVDEDGVLRRVRITPEDSPTKNYGFDVTPARLISALITNKGVCRANFDEIKEKFRG</sequence>
<organism>
    <name type="scientific">Sulfurimonas denitrificans (strain ATCC 33889 / DSM 1251)</name>
    <name type="common">Thiomicrospira denitrificans (strain ATCC 33889 / DSM 1251)</name>
    <dbReference type="NCBI Taxonomy" id="326298"/>
    <lineage>
        <taxon>Bacteria</taxon>
        <taxon>Pseudomonadati</taxon>
        <taxon>Campylobacterota</taxon>
        <taxon>Epsilonproteobacteria</taxon>
        <taxon>Campylobacterales</taxon>
        <taxon>Sulfurimonadaceae</taxon>
        <taxon>Sulfurimonas</taxon>
    </lineage>
</organism>